<proteinExistence type="evidence at transcript level"/>
<reference key="1">
    <citation type="submission" date="2007-06" db="EMBL/GenBank/DDBJ databases">
        <authorList>
            <consortium name="NIH - Mammalian Gene Collection (MGC) project"/>
        </authorList>
    </citation>
    <scope>NUCLEOTIDE SEQUENCE [LARGE SCALE MRNA]</scope>
    <source>
        <strain>Crossbred X Angus</strain>
        <strain>Hereford</strain>
        <tissue>Fetal medulla</tissue>
        <tissue>Ileum</tissue>
    </source>
</reference>
<accession>A6QLG5</accession>
<gene>
    <name type="primary">RPS9</name>
</gene>
<keyword id="KW-0007">Acetylation</keyword>
<keyword id="KW-0963">Cytoplasm</keyword>
<keyword id="KW-1017">Isopeptide bond</keyword>
<keyword id="KW-0539">Nucleus</keyword>
<keyword id="KW-0597">Phosphoprotein</keyword>
<keyword id="KW-1185">Reference proteome</keyword>
<keyword id="KW-0687">Ribonucleoprotein</keyword>
<keyword id="KW-0689">Ribosomal protein</keyword>
<keyword id="KW-0694">RNA-binding</keyword>
<keyword id="KW-0699">rRNA-binding</keyword>
<keyword id="KW-0832">Ubl conjugation</keyword>
<feature type="chain" id="PRO_0000319307" description="Small ribosomal subunit protein uS4">
    <location>
        <begin position="1"/>
        <end position="194"/>
    </location>
</feature>
<feature type="domain" description="S4 RNA-binding" evidence="3">
    <location>
        <begin position="108"/>
        <end position="182"/>
    </location>
</feature>
<feature type="region of interest" description="Disordered" evidence="4">
    <location>
        <begin position="162"/>
        <end position="194"/>
    </location>
</feature>
<feature type="modified residue" description="N6-acetyllysine" evidence="2">
    <location>
        <position position="66"/>
    </location>
</feature>
<feature type="modified residue" description="N6-acetyllysine" evidence="2">
    <location>
        <position position="116"/>
    </location>
</feature>
<feature type="modified residue" description="Phosphoserine" evidence="1">
    <location>
        <position position="153"/>
    </location>
</feature>
<feature type="modified residue" description="N6-acetyllysine" evidence="1">
    <location>
        <position position="155"/>
    </location>
</feature>
<feature type="modified residue" description="Phosphoserine" evidence="1">
    <location>
        <position position="163"/>
    </location>
</feature>
<feature type="cross-link" description="Glycyl lysine isopeptide (Lys-Gly) (interchain with G-Cter in SUMO2)" evidence="1">
    <location>
        <position position="93"/>
    </location>
</feature>
<feature type="cross-link" description="Glycyl lysine isopeptide (Lys-Gly) (interchain with G-Cter in SUMO2)" evidence="1">
    <location>
        <position position="139"/>
    </location>
</feature>
<organism>
    <name type="scientific">Bos taurus</name>
    <name type="common">Bovine</name>
    <dbReference type="NCBI Taxonomy" id="9913"/>
    <lineage>
        <taxon>Eukaryota</taxon>
        <taxon>Metazoa</taxon>
        <taxon>Chordata</taxon>
        <taxon>Craniata</taxon>
        <taxon>Vertebrata</taxon>
        <taxon>Euteleostomi</taxon>
        <taxon>Mammalia</taxon>
        <taxon>Eutheria</taxon>
        <taxon>Laurasiatheria</taxon>
        <taxon>Artiodactyla</taxon>
        <taxon>Ruminantia</taxon>
        <taxon>Pecora</taxon>
        <taxon>Bovidae</taxon>
        <taxon>Bovinae</taxon>
        <taxon>Bos</taxon>
    </lineage>
</organism>
<name>RS9_BOVIN</name>
<sequence>MPVARSWVCRKTYVTPRRPFEKSRLDQELKLIGEYGLRNKREVWRVKFTLAKIRKAARELLTLDEKDPRRLFEGNALLRRLVRIGVLDEGKMKLDYILGLKIEDFLERRLQTQVFKLGLAKSIHHARVLIRQRHIRVRKQVVNIPSFIVRLDSQKHIDFSLRSPYGGGRPGRVKRKNAKKGQGGAGAGDDEEED</sequence>
<evidence type="ECO:0000250" key="1">
    <source>
        <dbReference type="UniProtKB" id="P46781"/>
    </source>
</evidence>
<evidence type="ECO:0000250" key="2">
    <source>
        <dbReference type="UniProtKB" id="Q6ZWN5"/>
    </source>
</evidence>
<evidence type="ECO:0000255" key="3">
    <source>
        <dbReference type="PROSITE-ProRule" id="PRU00182"/>
    </source>
</evidence>
<evidence type="ECO:0000256" key="4">
    <source>
        <dbReference type="SAM" id="MobiDB-lite"/>
    </source>
</evidence>
<evidence type="ECO:0000305" key="5"/>
<protein>
    <recommendedName>
        <fullName evidence="5">Small ribosomal subunit protein uS4</fullName>
    </recommendedName>
    <alternativeName>
        <fullName>40S ribosomal protein S9</fullName>
    </alternativeName>
</protein>
<dbReference type="EMBL" id="BC147956">
    <property type="protein sequence ID" value="AAI47957.1"/>
    <property type="molecule type" value="mRNA"/>
</dbReference>
<dbReference type="EMBL" id="BC148016">
    <property type="protein sequence ID" value="AAI48017.1"/>
    <property type="molecule type" value="mRNA"/>
</dbReference>
<dbReference type="RefSeq" id="NP_001094622.1">
    <property type="nucleotide sequence ID" value="NM_001101152.2"/>
</dbReference>
<dbReference type="RefSeq" id="XP_024834134.1">
    <property type="nucleotide sequence ID" value="XM_024978366.2"/>
</dbReference>
<dbReference type="SMR" id="A6QLG5"/>
<dbReference type="FunCoup" id="A6QLG5">
    <property type="interactions" value="2359"/>
</dbReference>
<dbReference type="STRING" id="9913.ENSBTAP00000008502"/>
<dbReference type="PaxDb" id="9913-ENSBTAP00000008502"/>
<dbReference type="PeptideAtlas" id="A6QLG5"/>
<dbReference type="Ensembl" id="ENSBTAT00000008502.6">
    <property type="protein sequence ID" value="ENSBTAP00000008502.4"/>
    <property type="gene ID" value="ENSBTAG00000006487.6"/>
</dbReference>
<dbReference type="GeneID" id="533892"/>
<dbReference type="KEGG" id="bta:533892"/>
<dbReference type="CTD" id="6203"/>
<dbReference type="VEuPathDB" id="HostDB:ENSBTAG00000006487"/>
<dbReference type="VGNC" id="VGNC:34152">
    <property type="gene designation" value="RPS9"/>
</dbReference>
<dbReference type="eggNOG" id="KOG3301">
    <property type="taxonomic scope" value="Eukaryota"/>
</dbReference>
<dbReference type="GeneTree" id="ENSGT00550000074829"/>
<dbReference type="HOGENOM" id="CLU_089738_0_0_1"/>
<dbReference type="InParanoid" id="A6QLG5"/>
<dbReference type="OMA" id="RQFITHG"/>
<dbReference type="OrthoDB" id="1697570at2759"/>
<dbReference type="TreeFam" id="TF300795"/>
<dbReference type="Reactome" id="R-BTA-156827">
    <property type="pathway name" value="L13a-mediated translational silencing of Ceruloplasmin expression"/>
</dbReference>
<dbReference type="Reactome" id="R-BTA-1799339">
    <property type="pathway name" value="SRP-dependent cotranslational protein targeting to membrane"/>
</dbReference>
<dbReference type="Reactome" id="R-BTA-6791226">
    <property type="pathway name" value="Major pathway of rRNA processing in the nucleolus and cytosol"/>
</dbReference>
<dbReference type="Reactome" id="R-BTA-72649">
    <property type="pathway name" value="Translation initiation complex formation"/>
</dbReference>
<dbReference type="Reactome" id="R-BTA-72689">
    <property type="pathway name" value="Formation of a pool of free 40S subunits"/>
</dbReference>
<dbReference type="Reactome" id="R-BTA-72695">
    <property type="pathway name" value="Formation of the ternary complex, and subsequently, the 43S complex"/>
</dbReference>
<dbReference type="Reactome" id="R-BTA-72702">
    <property type="pathway name" value="Ribosomal scanning and start codon recognition"/>
</dbReference>
<dbReference type="Reactome" id="R-BTA-72706">
    <property type="pathway name" value="GTP hydrolysis and joining of the 60S ribosomal subunit"/>
</dbReference>
<dbReference type="Reactome" id="R-BTA-975956">
    <property type="pathway name" value="Nonsense Mediated Decay (NMD) independent of the Exon Junction Complex (EJC)"/>
</dbReference>
<dbReference type="Reactome" id="R-BTA-975957">
    <property type="pathway name" value="Nonsense Mediated Decay (NMD) enhanced by the Exon Junction Complex (EJC)"/>
</dbReference>
<dbReference type="CD-CODE" id="D7FE2080">
    <property type="entry name" value="Nucleolus"/>
</dbReference>
<dbReference type="Proteomes" id="UP000009136">
    <property type="component" value="Chromosome 18"/>
</dbReference>
<dbReference type="Bgee" id="ENSBTAG00000006487">
    <property type="expression patterns" value="Expressed in ileocecal valve and 107 other cell types or tissues"/>
</dbReference>
<dbReference type="GO" id="GO:0022627">
    <property type="term" value="C:cytosolic small ribosomal subunit"/>
    <property type="evidence" value="ECO:0000318"/>
    <property type="project" value="GO_Central"/>
</dbReference>
<dbReference type="GO" id="GO:0005730">
    <property type="term" value="C:nucleolus"/>
    <property type="evidence" value="ECO:0007669"/>
    <property type="project" value="UniProtKB-SubCell"/>
</dbReference>
<dbReference type="GO" id="GO:1990904">
    <property type="term" value="C:ribonucleoprotein complex"/>
    <property type="evidence" value="ECO:0000250"/>
    <property type="project" value="UniProtKB"/>
</dbReference>
<dbReference type="GO" id="GO:0032040">
    <property type="term" value="C:small-subunit processome"/>
    <property type="evidence" value="ECO:0000250"/>
    <property type="project" value="UniProtKB"/>
</dbReference>
<dbReference type="GO" id="GO:0019843">
    <property type="term" value="F:rRNA binding"/>
    <property type="evidence" value="ECO:0000318"/>
    <property type="project" value="GO_Central"/>
</dbReference>
<dbReference type="GO" id="GO:0003735">
    <property type="term" value="F:structural constituent of ribosome"/>
    <property type="evidence" value="ECO:0000318"/>
    <property type="project" value="GO_Central"/>
</dbReference>
<dbReference type="GO" id="GO:0042274">
    <property type="term" value="P:ribosomal small subunit biogenesis"/>
    <property type="evidence" value="ECO:0000250"/>
    <property type="project" value="UniProtKB"/>
</dbReference>
<dbReference type="GO" id="GO:0006412">
    <property type="term" value="P:translation"/>
    <property type="evidence" value="ECO:0007669"/>
    <property type="project" value="InterPro"/>
</dbReference>
<dbReference type="CDD" id="cd00165">
    <property type="entry name" value="S4"/>
    <property type="match status" value="1"/>
</dbReference>
<dbReference type="FunFam" id="3.10.290.10:FF:000021">
    <property type="entry name" value="40S ribosomal protein S9"/>
    <property type="match status" value="1"/>
</dbReference>
<dbReference type="Gene3D" id="3.10.290.10">
    <property type="entry name" value="RNA-binding S4 domain"/>
    <property type="match status" value="1"/>
</dbReference>
<dbReference type="InterPro" id="IPR022801">
    <property type="entry name" value="Ribosomal_uS4"/>
</dbReference>
<dbReference type="InterPro" id="IPR018079">
    <property type="entry name" value="Ribosomal_uS4_CS"/>
</dbReference>
<dbReference type="InterPro" id="IPR005710">
    <property type="entry name" value="Ribosomal_uS4_euk/arc"/>
</dbReference>
<dbReference type="InterPro" id="IPR001912">
    <property type="entry name" value="Ribosomal_uS4_N"/>
</dbReference>
<dbReference type="InterPro" id="IPR002942">
    <property type="entry name" value="S4_RNA-bd"/>
</dbReference>
<dbReference type="InterPro" id="IPR036986">
    <property type="entry name" value="S4_RNA-bd_sf"/>
</dbReference>
<dbReference type="NCBIfam" id="NF003139">
    <property type="entry name" value="PRK04051.1"/>
    <property type="match status" value="1"/>
</dbReference>
<dbReference type="NCBIfam" id="TIGR01018">
    <property type="entry name" value="uS4_arch"/>
    <property type="match status" value="1"/>
</dbReference>
<dbReference type="PANTHER" id="PTHR11831">
    <property type="entry name" value="30S 40S RIBOSOMAL PROTEIN"/>
    <property type="match status" value="1"/>
</dbReference>
<dbReference type="PANTHER" id="PTHR11831:SF46">
    <property type="entry name" value="SMALL RIBOSOMAL SUBUNIT PROTEIN US4"/>
    <property type="match status" value="1"/>
</dbReference>
<dbReference type="Pfam" id="PF00163">
    <property type="entry name" value="Ribosomal_S4"/>
    <property type="match status" value="1"/>
</dbReference>
<dbReference type="Pfam" id="PF01479">
    <property type="entry name" value="S4"/>
    <property type="match status" value="1"/>
</dbReference>
<dbReference type="SMART" id="SM01390">
    <property type="entry name" value="Ribosomal_S4"/>
    <property type="match status" value="1"/>
</dbReference>
<dbReference type="SMART" id="SM00363">
    <property type="entry name" value="S4"/>
    <property type="match status" value="1"/>
</dbReference>
<dbReference type="SUPFAM" id="SSF55174">
    <property type="entry name" value="Alpha-L RNA-binding motif"/>
    <property type="match status" value="1"/>
</dbReference>
<dbReference type="PROSITE" id="PS00632">
    <property type="entry name" value="RIBOSOMAL_S4"/>
    <property type="match status" value="1"/>
</dbReference>
<dbReference type="PROSITE" id="PS50889">
    <property type="entry name" value="S4"/>
    <property type="match status" value="1"/>
</dbReference>
<comment type="function">
    <text evidence="1">Component of the small ribosomal subunit. The ribosome is a large ribonucleoprotein complex responsible for the synthesis of proteins in the cell. Part of the small subunit (SSU) processome, first precursor of the small eukaryotic ribosomal subunit. During the assembly of the SSU processome in the nucleolus, many ribosome biogenesis factors, an RNA chaperone and ribosomal proteins associate with the nascent pre-rRNA and work in concert to generate RNA folding, modifications, rearrangements and cleavage as well as targeted degradation of pre-ribosomal RNA by the RNA exosome.</text>
</comment>
<comment type="subunit">
    <text evidence="1">Component of the small ribosomal subunit. Identified in a IGF2BP1-dependent mRNP granule complex containing untranslated mRNAs. Part of the small subunit (SSU) processome, composed of more than 70 proteins and the RNA chaperone small nucleolar RNA (snoRNA) U3.</text>
</comment>
<comment type="subcellular location">
    <subcellularLocation>
        <location evidence="1">Cytoplasm</location>
    </subcellularLocation>
    <subcellularLocation>
        <location evidence="1">Nucleus</location>
        <location evidence="1">Nucleolus</location>
    </subcellularLocation>
    <text evidence="1">Localized in cytoplasmic mRNP granules containing untranslated mRNAs.</text>
</comment>
<comment type="similarity">
    <text evidence="5">Belongs to the universal ribosomal protein uS4 family.</text>
</comment>